<dbReference type="EC" id="4.1.1.48" evidence="1"/>
<dbReference type="EMBL" id="BA000023">
    <property type="protein sequence ID" value="BAB66268.1"/>
    <property type="molecule type" value="Genomic_DNA"/>
</dbReference>
<dbReference type="RefSeq" id="WP_010979246.1">
    <property type="nucleotide sequence ID" value="NC_003106.2"/>
</dbReference>
<dbReference type="SMR" id="Q972A1"/>
<dbReference type="STRING" id="273063.STK_12260"/>
<dbReference type="GeneID" id="1459225"/>
<dbReference type="KEGG" id="sto:STK_12260"/>
<dbReference type="PATRIC" id="fig|273063.9.peg.1386"/>
<dbReference type="eggNOG" id="arCOG01088">
    <property type="taxonomic scope" value="Archaea"/>
</dbReference>
<dbReference type="OrthoDB" id="15223at2157"/>
<dbReference type="UniPathway" id="UPA00035">
    <property type="reaction ID" value="UER00043"/>
</dbReference>
<dbReference type="Proteomes" id="UP000001015">
    <property type="component" value="Chromosome"/>
</dbReference>
<dbReference type="GO" id="GO:0004425">
    <property type="term" value="F:indole-3-glycerol-phosphate synthase activity"/>
    <property type="evidence" value="ECO:0007669"/>
    <property type="project" value="UniProtKB-UniRule"/>
</dbReference>
<dbReference type="GO" id="GO:0004640">
    <property type="term" value="F:phosphoribosylanthranilate isomerase activity"/>
    <property type="evidence" value="ECO:0007669"/>
    <property type="project" value="TreeGrafter"/>
</dbReference>
<dbReference type="GO" id="GO:0000162">
    <property type="term" value="P:L-tryptophan biosynthetic process"/>
    <property type="evidence" value="ECO:0007669"/>
    <property type="project" value="UniProtKB-UniRule"/>
</dbReference>
<dbReference type="CDD" id="cd00331">
    <property type="entry name" value="IGPS"/>
    <property type="match status" value="1"/>
</dbReference>
<dbReference type="Gene3D" id="3.20.20.70">
    <property type="entry name" value="Aldolase class I"/>
    <property type="match status" value="1"/>
</dbReference>
<dbReference type="HAMAP" id="MF_00134_A">
    <property type="entry name" value="IGPS_A"/>
    <property type="match status" value="1"/>
</dbReference>
<dbReference type="InterPro" id="IPR013785">
    <property type="entry name" value="Aldolase_TIM"/>
</dbReference>
<dbReference type="InterPro" id="IPR045186">
    <property type="entry name" value="Indole-3-glycerol_P_synth"/>
</dbReference>
<dbReference type="InterPro" id="IPR013798">
    <property type="entry name" value="Indole-3-glycerol_P_synth_dom"/>
</dbReference>
<dbReference type="InterPro" id="IPR001468">
    <property type="entry name" value="Indole-3-GlycerolPSynthase_CS"/>
</dbReference>
<dbReference type="InterPro" id="IPR011060">
    <property type="entry name" value="RibuloseP-bd_barrel"/>
</dbReference>
<dbReference type="NCBIfam" id="NF001374">
    <property type="entry name" value="PRK00278.2-1"/>
    <property type="match status" value="1"/>
</dbReference>
<dbReference type="PANTHER" id="PTHR22854:SF2">
    <property type="entry name" value="INDOLE-3-GLYCEROL-PHOSPHATE SYNTHASE"/>
    <property type="match status" value="1"/>
</dbReference>
<dbReference type="PANTHER" id="PTHR22854">
    <property type="entry name" value="TRYPTOPHAN BIOSYNTHESIS PROTEIN"/>
    <property type="match status" value="1"/>
</dbReference>
<dbReference type="Pfam" id="PF00218">
    <property type="entry name" value="IGPS"/>
    <property type="match status" value="1"/>
</dbReference>
<dbReference type="SUPFAM" id="SSF51366">
    <property type="entry name" value="Ribulose-phoshate binding barrel"/>
    <property type="match status" value="1"/>
</dbReference>
<dbReference type="PROSITE" id="PS00614">
    <property type="entry name" value="IGPS"/>
    <property type="match status" value="1"/>
</dbReference>
<accession>Q972A1</accession>
<comment type="catalytic activity">
    <reaction evidence="1">
        <text>1-(2-carboxyphenylamino)-1-deoxy-D-ribulose 5-phosphate + H(+) = (1S,2R)-1-C-(indol-3-yl)glycerol 3-phosphate + CO2 + H2O</text>
        <dbReference type="Rhea" id="RHEA:23476"/>
        <dbReference type="ChEBI" id="CHEBI:15377"/>
        <dbReference type="ChEBI" id="CHEBI:15378"/>
        <dbReference type="ChEBI" id="CHEBI:16526"/>
        <dbReference type="ChEBI" id="CHEBI:58613"/>
        <dbReference type="ChEBI" id="CHEBI:58866"/>
        <dbReference type="EC" id="4.1.1.48"/>
    </reaction>
</comment>
<comment type="pathway">
    <text evidence="1">Amino-acid biosynthesis; L-tryptophan biosynthesis; L-tryptophan from chorismate: step 4/5.</text>
</comment>
<comment type="similarity">
    <text evidence="1">Belongs to the TrpC family.</text>
</comment>
<keyword id="KW-0028">Amino-acid biosynthesis</keyword>
<keyword id="KW-0057">Aromatic amino acid biosynthesis</keyword>
<keyword id="KW-0210">Decarboxylase</keyword>
<keyword id="KW-0456">Lyase</keyword>
<keyword id="KW-1185">Reference proteome</keyword>
<keyword id="KW-0822">Tryptophan biosynthesis</keyword>
<evidence type="ECO:0000255" key="1">
    <source>
        <dbReference type="HAMAP-Rule" id="MF_00134"/>
    </source>
</evidence>
<proteinExistence type="inferred from homology"/>
<organism>
    <name type="scientific">Sulfurisphaera tokodaii (strain DSM 16993 / JCM 10545 / NBRC 100140 / 7)</name>
    <name type="common">Sulfolobus tokodaii</name>
    <dbReference type="NCBI Taxonomy" id="273063"/>
    <lineage>
        <taxon>Archaea</taxon>
        <taxon>Thermoproteota</taxon>
        <taxon>Thermoprotei</taxon>
        <taxon>Sulfolobales</taxon>
        <taxon>Sulfolobaceae</taxon>
        <taxon>Sulfurisphaera</taxon>
    </lineage>
</organism>
<protein>
    <recommendedName>
        <fullName evidence="1">Indole-3-glycerol phosphate synthase</fullName>
        <shortName evidence="1">IGPS</shortName>
        <ecNumber evidence="1">4.1.1.48</ecNumber>
    </recommendedName>
</protein>
<feature type="chain" id="PRO_0000154303" description="Indole-3-glycerol phosphate synthase">
    <location>
        <begin position="1"/>
        <end position="246"/>
    </location>
</feature>
<gene>
    <name evidence="1" type="primary">trpC</name>
    <name type="ordered locus">STK_12260</name>
</gene>
<sequence length="246" mass="28101">MPRYLEGWLADVVKISLNRERINKVRERPIYLLSKFIKSTIDKNAIIAEFKRKSPSGLNENRDLEEYVKFMEENGAIGISVLTEEKYFGGSYSDLENAAKIVKIPILMKDFIVTEKQIDTAFNLGADAILLIVKILTERELINLYEYARNLGLEAIVEVTDENDLKIALMYDFNIIGVNARNLSSLEVNIRNARKILEMIPNDRIKIAESGIKNKEDIIELKKYGADAFLIGTTLMKDPNKIKELI</sequence>
<reference key="1">
    <citation type="journal article" date="2001" name="DNA Res.">
        <title>Complete genome sequence of an aerobic thermoacidophilic Crenarchaeon, Sulfolobus tokodaii strain7.</title>
        <authorList>
            <person name="Kawarabayasi Y."/>
            <person name="Hino Y."/>
            <person name="Horikawa H."/>
            <person name="Jin-no K."/>
            <person name="Takahashi M."/>
            <person name="Sekine M."/>
            <person name="Baba S."/>
            <person name="Ankai A."/>
            <person name="Kosugi H."/>
            <person name="Hosoyama A."/>
            <person name="Fukui S."/>
            <person name="Nagai Y."/>
            <person name="Nishijima K."/>
            <person name="Otsuka R."/>
            <person name="Nakazawa H."/>
            <person name="Takamiya M."/>
            <person name="Kato Y."/>
            <person name="Yoshizawa T."/>
            <person name="Tanaka T."/>
            <person name="Kudoh Y."/>
            <person name="Yamazaki J."/>
            <person name="Kushida N."/>
            <person name="Oguchi A."/>
            <person name="Aoki K."/>
            <person name="Masuda S."/>
            <person name="Yanagii M."/>
            <person name="Nishimura M."/>
            <person name="Yamagishi A."/>
            <person name="Oshima T."/>
            <person name="Kikuchi H."/>
        </authorList>
    </citation>
    <scope>NUCLEOTIDE SEQUENCE [LARGE SCALE GENOMIC DNA]</scope>
    <source>
        <strain>DSM 16993 / JCM 10545 / NBRC 100140 / 7</strain>
    </source>
</reference>
<name>TRPC_SULTO</name>